<proteinExistence type="evidence at protein level"/>
<keyword id="KW-0002">3D-structure</keyword>
<keyword id="KW-0051">Antiviral defense</keyword>
<keyword id="KW-1185">Reference proteome</keyword>
<keyword id="KW-0694">RNA-binding</keyword>
<feature type="chain" id="PRO_0000107465" description="CRISPR system Cms protein Csm4">
    <location>
        <begin position="1"/>
        <end position="376"/>
    </location>
</feature>
<feature type="region of interest" description="Disordered" evidence="2">
    <location>
        <begin position="332"/>
        <end position="355"/>
    </location>
</feature>
<feature type="mutagenesis site" description="No longer interacts with Csm3." evidence="3">
    <original>ED</original>
    <variation>AA</variation>
    <location>
        <begin position="229"/>
        <end position="230"/>
    </location>
</feature>
<feature type="strand" evidence="7">
    <location>
        <begin position="2"/>
        <end position="8"/>
    </location>
</feature>
<feature type="helix" evidence="7">
    <location>
        <begin position="30"/>
        <end position="50"/>
    </location>
</feature>
<feature type="helix" evidence="7">
    <location>
        <begin position="54"/>
        <end position="57"/>
    </location>
</feature>
<feature type="strand" evidence="7">
    <location>
        <begin position="66"/>
        <end position="69"/>
    </location>
</feature>
<feature type="strand" evidence="7">
    <location>
        <begin position="72"/>
        <end position="76"/>
    </location>
</feature>
<feature type="helix" evidence="7">
    <location>
        <begin position="81"/>
        <end position="83"/>
    </location>
</feature>
<feature type="turn" evidence="7">
    <location>
        <begin position="95"/>
        <end position="98"/>
    </location>
</feature>
<feature type="strand" evidence="7">
    <location>
        <begin position="102"/>
        <end position="104"/>
    </location>
</feature>
<feature type="helix" evidence="7">
    <location>
        <begin position="105"/>
        <end position="110"/>
    </location>
</feature>
<feature type="turn" evidence="7">
    <location>
        <begin position="111"/>
        <end position="114"/>
    </location>
</feature>
<feature type="turn" evidence="7">
    <location>
        <begin position="118"/>
        <end position="120"/>
    </location>
</feature>
<feature type="helix" evidence="7">
    <location>
        <begin position="122"/>
        <end position="128"/>
    </location>
</feature>
<feature type="strand" evidence="7">
    <location>
        <begin position="129"/>
        <end position="131"/>
    </location>
</feature>
<feature type="turn" evidence="7">
    <location>
        <begin position="132"/>
        <end position="134"/>
    </location>
</feature>
<feature type="helix" evidence="7">
    <location>
        <begin position="139"/>
        <end position="148"/>
    </location>
</feature>
<feature type="strand" evidence="7">
    <location>
        <begin position="154"/>
        <end position="156"/>
    </location>
</feature>
<feature type="strand" evidence="7">
    <location>
        <begin position="164"/>
        <end position="173"/>
    </location>
</feature>
<feature type="strand" evidence="7">
    <location>
        <begin position="188"/>
        <end position="198"/>
    </location>
</feature>
<feature type="strand" evidence="7">
    <location>
        <begin position="202"/>
        <end position="209"/>
    </location>
</feature>
<feature type="helix" evidence="7">
    <location>
        <begin position="215"/>
        <end position="226"/>
    </location>
</feature>
<feature type="helix" evidence="7">
    <location>
        <begin position="228"/>
        <end position="231"/>
    </location>
</feature>
<feature type="strand" evidence="7">
    <location>
        <begin position="244"/>
        <end position="251"/>
    </location>
</feature>
<feature type="helix" evidence="7">
    <location>
        <begin position="254"/>
        <end position="260"/>
    </location>
</feature>
<feature type="helix" evidence="7">
    <location>
        <begin position="265"/>
        <end position="268"/>
    </location>
</feature>
<feature type="strand" evidence="7">
    <location>
        <begin position="270"/>
        <end position="276"/>
    </location>
</feature>
<feature type="helix" evidence="7">
    <location>
        <begin position="284"/>
        <end position="287"/>
    </location>
</feature>
<feature type="strand" evidence="7">
    <location>
        <begin position="288"/>
        <end position="291"/>
    </location>
</feature>
<feature type="strand" evidence="7">
    <location>
        <begin position="293"/>
        <end position="296"/>
    </location>
</feature>
<feature type="helix" evidence="7">
    <location>
        <begin position="304"/>
        <end position="306"/>
    </location>
</feature>
<feature type="strand" evidence="7">
    <location>
        <begin position="310"/>
        <end position="316"/>
    </location>
</feature>
<feature type="strand" evidence="7">
    <location>
        <begin position="321"/>
        <end position="324"/>
    </location>
</feature>
<feature type="strand" evidence="7">
    <location>
        <begin position="364"/>
        <end position="367"/>
    </location>
</feature>
<comment type="function">
    <text evidence="1">CRISPR (clustered regularly interspaced short palindromic repeat) is an adaptive immune system that provides protection against mobile genetic elements (viruses, transposable elements and conjugative plasmids). CRISPR clusters contain spacers, sequences complementary to antecedent mobile elements, and target invading nucleic acids. CRISPR clusters are transcribed and processed into CRISPR RNA (crRNA). The type III-A Csm effector complex binds crRNA and acts as a crRNA-guided RNase, DNase and cyclic oligoadenylate synthase; binding of target RNA cognate to the crRNA is required for all activities.</text>
</comment>
<comment type="function">
    <text evidence="3 5">The subunit probably binds to the 5' handle of the crRNA, helping in discrimination between self- and non-self (Probable). The Csm3-Csm4 complex binds both crRNA and a non-specific RNA; Csm4 alone also binds RNA (PubMed:25451598).</text>
</comment>
<comment type="subunit">
    <text evidence="1 3">Part of the Csm effector complex that includes Cas10, Csm2, Csm3, Csm4 and Csm5 (By similarity). Stable Cas10/Csm1-Csm4, Csm3-Csm4 (which crystallizes as 2 heterodimers) and Cas10-Csm1-Csm3-Csm4 subcomplexes can be isolated (PubMed:25451598).</text>
</comment>
<comment type="miscellaneous">
    <text evidence="4">Encoded in a type III-A CRISPR locus.</text>
</comment>
<comment type="similarity">
    <text evidence="4">Belongs to the CRISPR-associated Csm4 family.</text>
</comment>
<dbReference type="EMBL" id="L77117">
    <property type="protein sequence ID" value="AAB99688.1"/>
    <property type="molecule type" value="Genomic_DNA"/>
</dbReference>
<dbReference type="PIR" id="B64508">
    <property type="entry name" value="B64508"/>
</dbReference>
<dbReference type="RefSeq" id="WP_010871192.1">
    <property type="nucleotide sequence ID" value="NC_000909.1"/>
</dbReference>
<dbReference type="PDB" id="4QTS">
    <property type="method" value="X-ray"/>
    <property type="resolution" value="3.10 A"/>
    <property type="chains" value="A/B=1-376"/>
</dbReference>
<dbReference type="PDBsum" id="4QTS"/>
<dbReference type="SMR" id="Q59062"/>
<dbReference type="FunCoup" id="Q59062">
    <property type="interactions" value="2"/>
</dbReference>
<dbReference type="STRING" id="243232.MJ_1668"/>
<dbReference type="PaxDb" id="243232-MJ_1668"/>
<dbReference type="EnsemblBacteria" id="AAB99688">
    <property type="protein sequence ID" value="AAB99688"/>
    <property type="gene ID" value="MJ_1668"/>
</dbReference>
<dbReference type="GeneID" id="1452577"/>
<dbReference type="KEGG" id="mja:MJ_1668"/>
<dbReference type="eggNOG" id="arCOG03222">
    <property type="taxonomic scope" value="Archaea"/>
</dbReference>
<dbReference type="HOGENOM" id="CLU_062371_0_0_2"/>
<dbReference type="InParanoid" id="Q59062"/>
<dbReference type="OrthoDB" id="62727at2157"/>
<dbReference type="PhylomeDB" id="Q59062"/>
<dbReference type="EvolutionaryTrace" id="Q59062"/>
<dbReference type="Proteomes" id="UP000000805">
    <property type="component" value="Chromosome"/>
</dbReference>
<dbReference type="GO" id="GO:0003723">
    <property type="term" value="F:RNA binding"/>
    <property type="evidence" value="ECO:0007669"/>
    <property type="project" value="UniProtKB-KW"/>
</dbReference>
<dbReference type="GO" id="GO:0051607">
    <property type="term" value="P:defense response to virus"/>
    <property type="evidence" value="ECO:0007669"/>
    <property type="project" value="UniProtKB-KW"/>
</dbReference>
<dbReference type="CDD" id="cd09663">
    <property type="entry name" value="Csm4_III-A"/>
    <property type="match status" value="1"/>
</dbReference>
<dbReference type="InterPro" id="IPR005510">
    <property type="entry name" value="Csm4"/>
</dbReference>
<dbReference type="InterPro" id="IPR040932">
    <property type="entry name" value="Csm4_C"/>
</dbReference>
<dbReference type="InterPro" id="IPR005537">
    <property type="entry name" value="RAMP_III_fam"/>
</dbReference>
<dbReference type="NCBIfam" id="TIGR01903">
    <property type="entry name" value="cas5_csm4"/>
    <property type="match status" value="1"/>
</dbReference>
<dbReference type="Pfam" id="PF17953">
    <property type="entry name" value="Csm4_C"/>
    <property type="match status" value="1"/>
</dbReference>
<dbReference type="Pfam" id="PF03787">
    <property type="entry name" value="RAMPs"/>
    <property type="match status" value="1"/>
</dbReference>
<gene>
    <name type="primary">csm4</name>
    <name type="ordered locus">MJ1668</name>
</gene>
<evidence type="ECO:0000250" key="1">
    <source>
        <dbReference type="UniProtKB" id="A0A0A7HGA1"/>
    </source>
</evidence>
<evidence type="ECO:0000256" key="2">
    <source>
        <dbReference type="SAM" id="MobiDB-lite"/>
    </source>
</evidence>
<evidence type="ECO:0000269" key="3">
    <source>
    </source>
</evidence>
<evidence type="ECO:0000305" key="4"/>
<evidence type="ECO:0000305" key="5">
    <source>
    </source>
</evidence>
<evidence type="ECO:0007744" key="6">
    <source>
        <dbReference type="PDB" id="4QTS"/>
    </source>
</evidence>
<evidence type="ECO:0007829" key="7">
    <source>
        <dbReference type="PDB" id="4QTS"/>
    </source>
</evidence>
<sequence>MKMVVLKPKINSKFHFGEGSLERNSKIFHSNSLFSAIVNNYIKLYGREDLEKNIEKIKNIRLSSLLYKIKNIYLIPKPEHPEFYKLKGNPGIKPKDIKKIQFFSIKAYKELLDNELDWKNKIKHIVDYQTINKSIVISEKEIEEIKRIFGIKAEKLKHAKISLISKHLEQKVAIDRLKDITLEKDDKGQLYNIEFIKLNENVEFYFLIDYNNEDKEFIKKLEASIKLIEDEGLGGKRSIGAGFFEKVEIVDLPEDFNEILDENSKYNNLEYKMLLGVGIPNKDDIKNIEYYKLIEIGGYIYSLECLTKPKRNILALTEGSIVKNDFIGDVKDISPQNDDDEQNKNNENNNKLNHKVYTHGKPILLPFNPKRDNYGS</sequence>
<organism>
    <name type="scientific">Methanocaldococcus jannaschii (strain ATCC 43067 / DSM 2661 / JAL-1 / JCM 10045 / NBRC 100440)</name>
    <name type="common">Methanococcus jannaschii</name>
    <dbReference type="NCBI Taxonomy" id="243232"/>
    <lineage>
        <taxon>Archaea</taxon>
        <taxon>Methanobacteriati</taxon>
        <taxon>Methanobacteriota</taxon>
        <taxon>Methanomada group</taxon>
        <taxon>Methanococci</taxon>
        <taxon>Methanococcales</taxon>
        <taxon>Methanocaldococcaceae</taxon>
        <taxon>Methanocaldococcus</taxon>
    </lineage>
</organism>
<name>CSM4_METJA</name>
<reference key="1">
    <citation type="journal article" date="1996" name="Science">
        <title>Complete genome sequence of the methanogenic archaeon, Methanococcus jannaschii.</title>
        <authorList>
            <person name="Bult C.J."/>
            <person name="White O."/>
            <person name="Olsen G.J."/>
            <person name="Zhou L."/>
            <person name="Fleischmann R.D."/>
            <person name="Sutton G.G."/>
            <person name="Blake J.A."/>
            <person name="FitzGerald L.M."/>
            <person name="Clayton R.A."/>
            <person name="Gocayne J.D."/>
            <person name="Kerlavage A.R."/>
            <person name="Dougherty B.A."/>
            <person name="Tomb J.-F."/>
            <person name="Adams M.D."/>
            <person name="Reich C.I."/>
            <person name="Overbeek R."/>
            <person name="Kirkness E.F."/>
            <person name="Weinstock K.G."/>
            <person name="Merrick J.M."/>
            <person name="Glodek A."/>
            <person name="Scott J.L."/>
            <person name="Geoghagen N.S.M."/>
            <person name="Weidman J.F."/>
            <person name="Fuhrmann J.L."/>
            <person name="Nguyen D."/>
            <person name="Utterback T.R."/>
            <person name="Kelley J.M."/>
            <person name="Peterson J.D."/>
            <person name="Sadow P.W."/>
            <person name="Hanna M.C."/>
            <person name="Cotton M.D."/>
            <person name="Roberts K.M."/>
            <person name="Hurst M.A."/>
            <person name="Kaine B.P."/>
            <person name="Borodovsky M."/>
            <person name="Klenk H.-P."/>
            <person name="Fraser C.M."/>
            <person name="Smith H.O."/>
            <person name="Woese C.R."/>
            <person name="Venter J.C."/>
        </authorList>
    </citation>
    <scope>NUCLEOTIDE SEQUENCE [LARGE SCALE GENOMIC DNA]</scope>
    <source>
        <strain>ATCC 43067 / DSM 2661 / JAL-1 / JCM 10045 / NBRC 100440</strain>
    </source>
</reference>
<reference evidence="6" key="2">
    <citation type="journal article" date="2015" name="J. Mol. Biol.">
        <title>Crystal structure of the Csm3-Csm4 subcomplex in the type III-A CRISPR-Cas interference complex.</title>
        <authorList>
            <person name="Numata T."/>
            <person name="Inanaga H."/>
            <person name="Sato C."/>
            <person name="Osawa T."/>
        </authorList>
    </citation>
    <scope>X-RAY CRYSTALLOGRAPHY (3.10 ANGSTROMS)</scope>
    <scope>SUBUNIT</scope>
    <scope>MUTAGENESIS OF 229-GLU-ASP-230</scope>
    <scope>RNA-BINDING</scope>
    <source>
        <strain>ATCC 43067 / DSM 2661 / JAL-1 / JCM 10045 / NBRC 100440</strain>
    </source>
</reference>
<protein>
    <recommendedName>
        <fullName>CRISPR system Cms protein Csm4</fullName>
    </recommendedName>
    <alternativeName>
        <fullName>CRISPR type III-A associated RAMP protein Csm4</fullName>
    </alternativeName>
</protein>
<accession>Q59062</accession>